<gene>
    <name type="primary">GCNT1</name>
    <name type="synonym">NACGT2</name>
</gene>
<proteinExistence type="evidence at protein level"/>
<organism>
    <name type="scientific">Homo sapiens</name>
    <name type="common">Human</name>
    <dbReference type="NCBI Taxonomy" id="9606"/>
    <lineage>
        <taxon>Eukaryota</taxon>
        <taxon>Metazoa</taxon>
        <taxon>Chordata</taxon>
        <taxon>Craniata</taxon>
        <taxon>Vertebrata</taxon>
        <taxon>Euteleostomi</taxon>
        <taxon>Mammalia</taxon>
        <taxon>Eutheria</taxon>
        <taxon>Euarchontoglires</taxon>
        <taxon>Primates</taxon>
        <taxon>Haplorrhini</taxon>
        <taxon>Catarrhini</taxon>
        <taxon>Hominidae</taxon>
        <taxon>Homo</taxon>
    </lineage>
</organism>
<keyword id="KW-1015">Disulfide bond</keyword>
<keyword id="KW-0325">Glycoprotein</keyword>
<keyword id="KW-0328">Glycosyltransferase</keyword>
<keyword id="KW-0333">Golgi apparatus</keyword>
<keyword id="KW-0472">Membrane</keyword>
<keyword id="KW-1267">Proteomics identification</keyword>
<keyword id="KW-1185">Reference proteome</keyword>
<keyword id="KW-0735">Signal-anchor</keyword>
<keyword id="KW-0808">Transferase</keyword>
<keyword id="KW-0812">Transmembrane</keyword>
<keyword id="KW-1133">Transmembrane helix</keyword>
<reference key="1">
    <citation type="journal article" date="1992" name="Proc. Natl. Acad. Sci. U.S.A.">
        <title>Expression cloning of a cDNA encoding UDP-GlcNAc:Gal beta 1-3-GalNAc-R (GlcNAc to GalNAc) beta 1-6GlcNAc transferase by gene transfer into CHO cells expressing polyoma large tumor antigen.</title>
        <authorList>
            <person name="Bierhuizen M.F.A."/>
            <person name="Fukuda M."/>
        </authorList>
    </citation>
    <scope>NUCLEOTIDE SEQUENCE [MRNA]</scope>
    <scope>VARIANT VAL-152</scope>
    <scope>FUNCTION</scope>
    <scope>CATALYTIC ACTIVITY</scope>
    <scope>PATHWAY</scope>
</reference>
<reference key="2">
    <citation type="journal article" date="1995" name="Glycobiology">
        <title>Genomic organization of core 2 and I branching beta-1,6-N-acetylglucosaminyltransferases. Implication for evolution of the beta-1,6-N-acetylglucosaminyltransferase gene family.</title>
        <authorList>
            <person name="Bierhuizen M.F.A."/>
            <person name="Maemura K."/>
            <person name="Kudo S."/>
            <person name="Fukuda M."/>
        </authorList>
    </citation>
    <scope>NUCLEOTIDE SEQUENCE [GENOMIC DNA]</scope>
    <scope>VARIANT VAL-152</scope>
    <source>
        <tissue>Placenta</tissue>
    </source>
</reference>
<reference key="3">
    <citation type="journal article" date="2004" name="Nature">
        <title>DNA sequence and analysis of human chromosome 9.</title>
        <authorList>
            <person name="Humphray S.J."/>
            <person name="Oliver K."/>
            <person name="Hunt A.R."/>
            <person name="Plumb R.W."/>
            <person name="Loveland J.E."/>
            <person name="Howe K.L."/>
            <person name="Andrews T.D."/>
            <person name="Searle S."/>
            <person name="Hunt S.E."/>
            <person name="Scott C.E."/>
            <person name="Jones M.C."/>
            <person name="Ainscough R."/>
            <person name="Almeida J.P."/>
            <person name="Ambrose K.D."/>
            <person name="Ashwell R.I.S."/>
            <person name="Babbage A.K."/>
            <person name="Babbage S."/>
            <person name="Bagguley C.L."/>
            <person name="Bailey J."/>
            <person name="Banerjee R."/>
            <person name="Barker D.J."/>
            <person name="Barlow K.F."/>
            <person name="Bates K."/>
            <person name="Beasley H."/>
            <person name="Beasley O."/>
            <person name="Bird C.P."/>
            <person name="Bray-Allen S."/>
            <person name="Brown A.J."/>
            <person name="Brown J.Y."/>
            <person name="Burford D."/>
            <person name="Burrill W."/>
            <person name="Burton J."/>
            <person name="Carder C."/>
            <person name="Carter N.P."/>
            <person name="Chapman J.C."/>
            <person name="Chen Y."/>
            <person name="Clarke G."/>
            <person name="Clark S.Y."/>
            <person name="Clee C.M."/>
            <person name="Clegg S."/>
            <person name="Collier R.E."/>
            <person name="Corby N."/>
            <person name="Crosier M."/>
            <person name="Cummings A.T."/>
            <person name="Davies J."/>
            <person name="Dhami P."/>
            <person name="Dunn M."/>
            <person name="Dutta I."/>
            <person name="Dyer L.W."/>
            <person name="Earthrowl M.E."/>
            <person name="Faulkner L."/>
            <person name="Fleming C.J."/>
            <person name="Frankish A."/>
            <person name="Frankland J.A."/>
            <person name="French L."/>
            <person name="Fricker D.G."/>
            <person name="Garner P."/>
            <person name="Garnett J."/>
            <person name="Ghori J."/>
            <person name="Gilbert J.G.R."/>
            <person name="Glison C."/>
            <person name="Grafham D.V."/>
            <person name="Gribble S."/>
            <person name="Griffiths C."/>
            <person name="Griffiths-Jones S."/>
            <person name="Grocock R."/>
            <person name="Guy J."/>
            <person name="Hall R.E."/>
            <person name="Hammond S."/>
            <person name="Harley J.L."/>
            <person name="Harrison E.S.I."/>
            <person name="Hart E.A."/>
            <person name="Heath P.D."/>
            <person name="Henderson C.D."/>
            <person name="Hopkins B.L."/>
            <person name="Howard P.J."/>
            <person name="Howden P.J."/>
            <person name="Huckle E."/>
            <person name="Johnson C."/>
            <person name="Johnson D."/>
            <person name="Joy A.A."/>
            <person name="Kay M."/>
            <person name="Keenan S."/>
            <person name="Kershaw J.K."/>
            <person name="Kimberley A.M."/>
            <person name="King A."/>
            <person name="Knights A."/>
            <person name="Laird G.K."/>
            <person name="Langford C."/>
            <person name="Lawlor S."/>
            <person name="Leongamornlert D.A."/>
            <person name="Leversha M."/>
            <person name="Lloyd C."/>
            <person name="Lloyd D.M."/>
            <person name="Lovell J."/>
            <person name="Martin S."/>
            <person name="Mashreghi-Mohammadi M."/>
            <person name="Matthews L."/>
            <person name="McLaren S."/>
            <person name="McLay K.E."/>
            <person name="McMurray A."/>
            <person name="Milne S."/>
            <person name="Nickerson T."/>
            <person name="Nisbett J."/>
            <person name="Nordsiek G."/>
            <person name="Pearce A.V."/>
            <person name="Peck A.I."/>
            <person name="Porter K.M."/>
            <person name="Pandian R."/>
            <person name="Pelan S."/>
            <person name="Phillimore B."/>
            <person name="Povey S."/>
            <person name="Ramsey Y."/>
            <person name="Rand V."/>
            <person name="Scharfe M."/>
            <person name="Sehra H.K."/>
            <person name="Shownkeen R."/>
            <person name="Sims S.K."/>
            <person name="Skuce C.D."/>
            <person name="Smith M."/>
            <person name="Steward C.A."/>
            <person name="Swarbreck D."/>
            <person name="Sycamore N."/>
            <person name="Tester J."/>
            <person name="Thorpe A."/>
            <person name="Tracey A."/>
            <person name="Tromans A."/>
            <person name="Thomas D.W."/>
            <person name="Wall M."/>
            <person name="Wallis J.M."/>
            <person name="West A.P."/>
            <person name="Whitehead S.L."/>
            <person name="Willey D.L."/>
            <person name="Williams S.A."/>
            <person name="Wilming L."/>
            <person name="Wray P.W."/>
            <person name="Young L."/>
            <person name="Ashurst J.L."/>
            <person name="Coulson A."/>
            <person name="Blocker H."/>
            <person name="Durbin R.M."/>
            <person name="Sulston J.E."/>
            <person name="Hubbard T."/>
            <person name="Jackson M.J."/>
            <person name="Bentley D.R."/>
            <person name="Beck S."/>
            <person name="Rogers J."/>
            <person name="Dunham I."/>
        </authorList>
    </citation>
    <scope>NUCLEOTIDE SEQUENCE [LARGE SCALE GENOMIC DNA]</scope>
</reference>
<reference key="4">
    <citation type="submission" date="2005-07" db="EMBL/GenBank/DDBJ databases">
        <authorList>
            <person name="Mural R.J."/>
            <person name="Istrail S."/>
            <person name="Sutton G.G."/>
            <person name="Florea L."/>
            <person name="Halpern A.L."/>
            <person name="Mobarry C.M."/>
            <person name="Lippert R."/>
            <person name="Walenz B."/>
            <person name="Shatkay H."/>
            <person name="Dew I."/>
            <person name="Miller J.R."/>
            <person name="Flanigan M.J."/>
            <person name="Edwards N.J."/>
            <person name="Bolanos R."/>
            <person name="Fasulo D."/>
            <person name="Halldorsson B.V."/>
            <person name="Hannenhalli S."/>
            <person name="Turner R."/>
            <person name="Yooseph S."/>
            <person name="Lu F."/>
            <person name="Nusskern D.R."/>
            <person name="Shue B.C."/>
            <person name="Zheng X.H."/>
            <person name="Zhong F."/>
            <person name="Delcher A.L."/>
            <person name="Huson D.H."/>
            <person name="Kravitz S.A."/>
            <person name="Mouchard L."/>
            <person name="Reinert K."/>
            <person name="Remington K.A."/>
            <person name="Clark A.G."/>
            <person name="Waterman M.S."/>
            <person name="Eichler E.E."/>
            <person name="Adams M.D."/>
            <person name="Hunkapiller M.W."/>
            <person name="Myers E.W."/>
            <person name="Venter J.C."/>
        </authorList>
    </citation>
    <scope>NUCLEOTIDE SEQUENCE [LARGE SCALE GENOMIC DNA]</scope>
</reference>
<reference key="5">
    <citation type="journal article" date="2004" name="Genome Res.">
        <title>The status, quality, and expansion of the NIH full-length cDNA project: the Mammalian Gene Collection (MGC).</title>
        <authorList>
            <consortium name="The MGC Project Team"/>
        </authorList>
    </citation>
    <scope>NUCLEOTIDE SEQUENCE [LARGE SCALE MRNA]</scope>
    <source>
        <tissue>Lung</tissue>
    </source>
</reference>
<reference key="6">
    <citation type="journal article" date="2012" name="J. Biol. Chem.">
        <title>Golgi phosphoprotein 3 determines cell binding properties under dynamic flow by controlling Golgi localization of core 2 N-acetylglucosaminyltransferase 1.</title>
        <authorList>
            <person name="Ali M.F."/>
            <person name="Chachadi V.B."/>
            <person name="Petrosyan A."/>
            <person name="Cheng P.W."/>
        </authorList>
    </citation>
    <scope>FUNCTION</scope>
    <scope>INTERACTION WITH GOLPH3</scope>
    <scope>SUBCELLULAR LOCATION</scope>
    <scope>MUTAGENESIS OF 5-LEU-LEU-6 AND 7-ARG--ARG-9</scope>
</reference>
<feature type="chain" id="PRO_0000191395" description="Beta-1,3-galactosyl-O-glycosyl-glycoprotein beta-1,6-N-acetylglucosaminyltransferase">
    <location>
        <begin position="1"/>
        <end position="428"/>
    </location>
</feature>
<feature type="topological domain" description="Cytoplasmic" evidence="2">
    <location>
        <begin position="1"/>
        <end position="9"/>
    </location>
</feature>
<feature type="transmembrane region" description="Helical; Signal-anchor for type II membrane protein" evidence="2">
    <location>
        <begin position="10"/>
        <end position="32"/>
    </location>
</feature>
<feature type="topological domain" description="Lumenal" evidence="2">
    <location>
        <begin position="33"/>
        <end position="428"/>
    </location>
</feature>
<feature type="region of interest" description="Mediates interaction with GOLPH3 and is necessary and sufficient for localization to the Golgi" evidence="4">
    <location>
        <begin position="5"/>
        <end position="9"/>
    </location>
</feature>
<feature type="region of interest" description="Stem region" evidence="1">
    <location>
        <begin position="33"/>
        <end position="121"/>
    </location>
</feature>
<feature type="region of interest" description="Catalytic" evidence="1">
    <location>
        <begin position="122"/>
        <end position="428"/>
    </location>
</feature>
<feature type="active site" description="Nucleophile" evidence="1">
    <location>
        <position position="320"/>
    </location>
</feature>
<feature type="binding site" evidence="1">
    <location>
        <begin position="128"/>
        <end position="130"/>
    </location>
    <ligand>
        <name>UDP-N-acetyl-alpha-D-glucosamine</name>
        <dbReference type="ChEBI" id="CHEBI:57705"/>
    </ligand>
</feature>
<feature type="binding site" evidence="1">
    <location>
        <begin position="155"/>
        <end position="157"/>
    </location>
    <ligand>
        <name>UDP-N-acetyl-alpha-D-glucosamine</name>
        <dbReference type="ChEBI" id="CHEBI:57705"/>
    </ligand>
</feature>
<feature type="binding site" evidence="1">
    <location>
        <position position="187"/>
    </location>
    <ligand>
        <name>UDP-N-acetyl-alpha-D-glucosamine</name>
        <dbReference type="ChEBI" id="CHEBI:57705"/>
    </ligand>
</feature>
<feature type="binding site" evidence="1">
    <location>
        <position position="243"/>
    </location>
    <ligand>
        <name>a glycoprotein</name>
        <dbReference type="ChEBI" id="CHEBI:17089"/>
    </ligand>
    <ligandPart>
        <name>beta-D-galactosyl-(1-&gt;3)-N-acetyl-alpha-D-galactosaminyl group</name>
        <dbReference type="ChEBI" id="CHEBI:16117"/>
    </ligandPart>
</feature>
<feature type="binding site" evidence="1">
    <location>
        <position position="251"/>
    </location>
    <ligand>
        <name>a glycoprotein</name>
        <dbReference type="ChEBI" id="CHEBI:17089"/>
    </ligand>
    <ligandPart>
        <name>beta-D-galactosyl-(1-&gt;3)-N-acetyl-alpha-D-galactosaminyl group</name>
        <dbReference type="ChEBI" id="CHEBI:16117"/>
    </ligandPart>
</feature>
<feature type="binding site" evidence="1">
    <location>
        <position position="254"/>
    </location>
    <ligand>
        <name>a glycoprotein</name>
        <dbReference type="ChEBI" id="CHEBI:17089"/>
    </ligand>
    <ligandPart>
        <name>beta-D-galactosyl-(1-&gt;3)-N-acetyl-alpha-D-galactosaminyl group</name>
        <dbReference type="ChEBI" id="CHEBI:16117"/>
    </ligandPart>
</feature>
<feature type="binding site" evidence="1">
    <location>
        <position position="320"/>
    </location>
    <ligand>
        <name>a glycoprotein</name>
        <dbReference type="ChEBI" id="CHEBI:17089"/>
    </ligand>
    <ligandPart>
        <name>beta-D-galactosyl-(1-&gt;3)-N-acetyl-alpha-D-galactosaminyl group</name>
        <dbReference type="ChEBI" id="CHEBI:16117"/>
    </ligandPart>
</feature>
<feature type="binding site" evidence="1">
    <location>
        <position position="341"/>
    </location>
    <ligand>
        <name>a glycoprotein</name>
        <dbReference type="ChEBI" id="CHEBI:17089"/>
    </ligand>
    <ligandPart>
        <name>beta-D-galactosyl-(1-&gt;3)-N-acetyl-alpha-D-galactosaminyl group</name>
        <dbReference type="ChEBI" id="CHEBI:16117"/>
    </ligandPart>
</feature>
<feature type="binding site" evidence="1">
    <location>
        <position position="358"/>
    </location>
    <ligand>
        <name>a glycoprotein</name>
        <dbReference type="ChEBI" id="CHEBI:17089"/>
    </ligand>
    <ligandPart>
        <name>beta-D-galactosyl-(1-&gt;3)-N-acetyl-alpha-D-galactosaminyl group</name>
        <dbReference type="ChEBI" id="CHEBI:16117"/>
    </ligandPart>
</feature>
<feature type="binding site" evidence="1">
    <location>
        <position position="378"/>
    </location>
    <ligand>
        <name>UDP-N-acetyl-alpha-D-glucosamine</name>
        <dbReference type="ChEBI" id="CHEBI:57705"/>
    </ligand>
</feature>
<feature type="binding site" evidence="1">
    <location>
        <position position="401"/>
    </location>
    <ligand>
        <name>UDP-N-acetyl-alpha-D-glucosamine</name>
        <dbReference type="ChEBI" id="CHEBI:57705"/>
    </ligand>
</feature>
<feature type="glycosylation site" description="N-linked (GlcNAc...) asparagine" evidence="2">
    <location>
        <position position="58"/>
    </location>
</feature>
<feature type="glycosylation site" description="N-linked (GlcNAc...) asparagine" evidence="2">
    <location>
        <position position="95"/>
    </location>
</feature>
<feature type="disulfide bond" evidence="1">
    <location>
        <begin position="59"/>
        <end position="413"/>
    </location>
</feature>
<feature type="disulfide bond" evidence="1">
    <location>
        <begin position="100"/>
        <end position="172"/>
    </location>
</feature>
<feature type="disulfide bond" evidence="1">
    <location>
        <begin position="151"/>
        <end position="199"/>
    </location>
</feature>
<feature type="disulfide bond" evidence="1">
    <location>
        <begin position="372"/>
        <end position="381"/>
    </location>
</feature>
<feature type="sequence variant" id="VAR_048000" description="In dbSNP:rs2282683." evidence="3 5">
    <original>I</original>
    <variation>V</variation>
    <location>
        <position position="152"/>
    </location>
</feature>
<feature type="sequence variant" id="VAR_048001" description="In dbSNP:rs11546569.">
    <original>S</original>
    <variation>C</variation>
    <location>
        <position position="158"/>
    </location>
</feature>
<feature type="mutagenesis site" description="Loss of interaction with GOLPH3 and loss of localization to the Golgi." evidence="4">
    <original>LL</original>
    <variation>AA</variation>
    <location>
        <begin position="5"/>
        <end position="6"/>
    </location>
</feature>
<feature type="mutagenesis site" description="Loss of interaction with GOLPH3 and loss of localization to the Golgi." evidence="4">
    <original>RRR</original>
    <variation>AAA</variation>
    <location>
        <begin position="7"/>
        <end position="9"/>
    </location>
</feature>
<comment type="function">
    <text evidence="1 3 4">Glycosyltransferase that catalyzes the transfer of an N-acetylglucosamine (GlcNAc) moiety in beta1-6 linkage from UDP-GlcNAc onto mucin-type core 1 O-glycan to form the branched mucin-type core 2 O-glycan (PubMed:1329093, PubMed:23027862). The catalysis is metal ion-independent and occurs with inversion of the anomeric configuration of sugar donor (By similarity). Selectively involved in synthesis of mucin-type core 2 O-glycans that serve as scaffolds for the display of selectin ligand sialyl Lewis X epitope by myeloid cells, with an impact on homeostasis and recruitment to inflammatory sites (By similarity). Can also act on glycolipid substrates. Transfers GlcNAc moiety to GalGb4Cer globosides in a reaction step to the synthesis of stage-specific embryonic antigen 1 (SSEA-1) determinant (By similarity). Can use Galbeta1-3GalNAcalpha1- and Galbeta1-3GalNAcbeta1- oligosaccharide derivatives as acceptor substrates (By similarity).</text>
</comment>
<comment type="catalytic activity">
    <reaction evidence="3">
        <text>a 3-O-[beta-D-galactosyl-(1-&gt;3)-N-acetyl-alpha-D-galactosaminyl]-L-seryl-[protein] + UDP-N-acetyl-alpha-D-glucosamine = 3-O-{beta-D-galactosyl-(1-&gt;3)-[N-acetyl-beta-D-glucosaminyl-(1-&gt;6)]-N-acetyl-alpha-D-galactosaminyl}-L-seryl-[protein] + UDP + H(+)</text>
        <dbReference type="Rhea" id="RHEA:56212"/>
        <dbReference type="Rhea" id="RHEA-COMP:13922"/>
        <dbReference type="Rhea" id="RHEA-COMP:14419"/>
        <dbReference type="ChEBI" id="CHEBI:15378"/>
        <dbReference type="ChEBI" id="CHEBI:57705"/>
        <dbReference type="ChEBI" id="CHEBI:58223"/>
        <dbReference type="ChEBI" id="CHEBI:137949"/>
        <dbReference type="ChEBI" id="CHEBI:139605"/>
        <dbReference type="EC" id="2.4.1.102"/>
    </reaction>
    <physiologicalReaction direction="left-to-right" evidence="3">
        <dbReference type="Rhea" id="RHEA:56213"/>
    </physiologicalReaction>
</comment>
<comment type="catalytic activity">
    <reaction evidence="3">
        <text>a 3-O-[beta-D-galactosyl-(1-&gt;3)-N-acetyl-alpha-D-galactosaminyl]-L-threonyl-[protein] + UDP-N-acetyl-alpha-D-glucosamine = a 3-O-{beta-D-galactosyl-(1-&gt;3)-[N-acetyl-beta-D-glucosaminyl-(1-&gt;6)]-N-acetyl-alpha-D-galactosaminyl}-L-threonyl-[protein] + UDP + H(+)</text>
        <dbReference type="Rhea" id="RHEA:56216"/>
        <dbReference type="Rhea" id="RHEA-COMP:13923"/>
        <dbReference type="Rhea" id="RHEA-COMP:14420"/>
        <dbReference type="ChEBI" id="CHEBI:15378"/>
        <dbReference type="ChEBI" id="CHEBI:57705"/>
        <dbReference type="ChEBI" id="CHEBI:58223"/>
        <dbReference type="ChEBI" id="CHEBI:137950"/>
        <dbReference type="ChEBI" id="CHEBI:139607"/>
        <dbReference type="EC" id="2.4.1.102"/>
    </reaction>
    <physiologicalReaction direction="left-to-right" evidence="3">
        <dbReference type="Rhea" id="RHEA:56217"/>
    </physiologicalReaction>
</comment>
<comment type="catalytic activity">
    <reaction evidence="1">
        <text>a globoside GalGb4Cer + UDP-N-acetyl-alpha-D-glucosamine = a globoside GlcNAc-(beta1-&gt;6)-GalGb4Cer + UDP + H(+)</text>
        <dbReference type="Rhea" id="RHEA:56900"/>
        <dbReference type="ChEBI" id="CHEBI:15378"/>
        <dbReference type="ChEBI" id="CHEBI:57705"/>
        <dbReference type="ChEBI" id="CHEBI:58223"/>
        <dbReference type="ChEBI" id="CHEBI:140691"/>
        <dbReference type="ChEBI" id="CHEBI:140702"/>
    </reaction>
    <physiologicalReaction direction="left-to-right" evidence="1">
        <dbReference type="Rhea" id="RHEA:56901"/>
    </physiologicalReaction>
</comment>
<comment type="catalytic activity">
    <reaction evidence="1">
        <text>a ganglioside GA1 + UDP-N-acetyl-alpha-D-glucosamine = a ganglioside beta-D-GlcNAc-(1-&gt;6)-GA1 + UDP + H(+)</text>
        <dbReference type="Rhea" id="RHEA:69691"/>
        <dbReference type="ChEBI" id="CHEBI:15378"/>
        <dbReference type="ChEBI" id="CHEBI:57705"/>
        <dbReference type="ChEBI" id="CHEBI:58223"/>
        <dbReference type="ChEBI" id="CHEBI:88069"/>
        <dbReference type="ChEBI" id="CHEBI:187897"/>
    </reaction>
    <physiologicalReaction direction="left-to-right" evidence="1">
        <dbReference type="Rhea" id="RHEA:69692"/>
    </physiologicalReaction>
</comment>
<comment type="pathway">
    <text evidence="3">Protein modification; protein glycosylation.</text>
</comment>
<comment type="pathway">
    <text evidence="1">Glycolipid biosynthesis.</text>
</comment>
<comment type="subunit">
    <text evidence="4">Interacts with GOLPH3; may control GCNT1 retention in the Golgi.</text>
</comment>
<comment type="interaction">
    <interactant intactId="EBI-8766035">
        <id>Q02742</id>
    </interactant>
    <interactant intactId="EBI-2465479">
        <id>Q9H4A6</id>
        <label>GOLPH3</label>
    </interactant>
    <organismsDiffer>false</organismsDiffer>
    <experiments>6</experiments>
</comment>
<comment type="subcellular location">
    <subcellularLocation>
        <location evidence="4">Golgi apparatus membrane</location>
        <topology evidence="4">Single-pass type II membrane protein</topology>
    </subcellularLocation>
    <text>Also detected in the trans-Golgi network.</text>
</comment>
<comment type="tissue specificity">
    <text>Highly expressed in activated T-lymphocytes and myeloid cells.</text>
</comment>
<comment type="similarity">
    <text evidence="7">Belongs to the glycosyltransferase 14 family.</text>
</comment>
<comment type="online information" name="Functional Glycomics Gateway - GTase">
    <link uri="http://www.functionalglycomics.org/glycomics/molecule/jsp/glycoEnzyme/viewGlycoEnzyme.jsp?gbpId=gt_hum_541"/>
    <text>Beta-1,3-galactosyl-O-glycosyl-glycoprotein beta-1,6-N-acetylglucosaminyltransferase</text>
</comment>
<evidence type="ECO:0000250" key="1">
    <source>
        <dbReference type="UniProtKB" id="Q09324"/>
    </source>
</evidence>
<evidence type="ECO:0000255" key="2"/>
<evidence type="ECO:0000269" key="3">
    <source>
    </source>
</evidence>
<evidence type="ECO:0000269" key="4">
    <source>
    </source>
</evidence>
<evidence type="ECO:0000269" key="5">
    <source>
    </source>
</evidence>
<evidence type="ECO:0000303" key="6">
    <source>
    </source>
</evidence>
<evidence type="ECO:0000305" key="7"/>
<accession>Q02742</accession>
<accession>Q6DJZ4</accession>
<name>GCNT1_HUMAN</name>
<protein>
    <recommendedName>
        <fullName>Beta-1,3-galactosyl-O-glycosyl-glycoprotein beta-1,6-N-acetylglucosaminyltransferase</fullName>
        <ecNumber evidence="3">2.4.1.102</ecNumber>
    </recommendedName>
    <alternativeName>
        <fullName evidence="1">Core 2 beta-1,6-N-acetylglucosaminyltransferase</fullName>
        <shortName evidence="1">C2GlcNAcT</shortName>
    </alternativeName>
    <alternativeName>
        <fullName>Core 2-branching enzyme</fullName>
    </alternativeName>
    <alternativeName>
        <fullName>Core2-GlcNAc-transferase</fullName>
        <shortName evidence="6">C2GNT</shortName>
        <shortName>Core 2 GNT</shortName>
    </alternativeName>
    <alternativeName>
        <fullName evidence="1">Leukocyte type core 2 beta-1,6-N-acetylglucosaminyltransferase</fullName>
        <shortName evidence="1">C2GnT-L</shortName>
    </alternativeName>
</protein>
<sequence length="428" mass="49799">MLRTLLRRRLFSYPTKYYFMVLVLSLITFSVLRIHQKPEFVSVRHLELAGENPSSDINCTKVLQGDVNEIQKVKLEILTVKFKKRPRWTPDDYINMTSDCSSFIKRRKYIVEPLSKEEAEFPIAYSIVVHHKIEMLDRLLRAIYMPQNFYCIHVDTKSEDSYLAAVMGIASCFSNVFVASRLESVVYASWSRVQADLNCMKDLYAMSANWKYLINLCGMDFPIKTNLEIVRKLKLLMGENNLETERMPSHKEERWKKRYEVVNGKLTNTGTVKMLPPLETPLFSGSAYFVVSREYVGYVLQNEKIQKLMEWAQDTYSPDEYLWATIQRIPEVPGSLPASHKYDLSDMQAVARFVKWQYFEGDVSKGAPYPPCDGVHVRSVCIFGAGDLNWMLRKHHLFANKFDVDVDLFAIQCLDEHLRHKALETLKH</sequence>
<dbReference type="EC" id="2.4.1.102" evidence="3"/>
<dbReference type="EMBL" id="M97347">
    <property type="protein sequence ID" value="AAA35919.1"/>
    <property type="molecule type" value="mRNA"/>
</dbReference>
<dbReference type="EMBL" id="L41415">
    <property type="protein sequence ID" value="AAA96661.1"/>
    <property type="molecule type" value="Genomic_DNA"/>
</dbReference>
<dbReference type="EMBL" id="AL161626">
    <property type="status" value="NOT_ANNOTATED_CDS"/>
    <property type="molecule type" value="Genomic_DNA"/>
</dbReference>
<dbReference type="EMBL" id="CH471089">
    <property type="protein sequence ID" value="EAW62580.1"/>
    <property type="molecule type" value="Genomic_DNA"/>
</dbReference>
<dbReference type="EMBL" id="BC074885">
    <property type="protein sequence ID" value="AAH74885.1"/>
    <property type="molecule type" value="mRNA"/>
</dbReference>
<dbReference type="EMBL" id="BC074886">
    <property type="protein sequence ID" value="AAH74886.1"/>
    <property type="molecule type" value="mRNA"/>
</dbReference>
<dbReference type="EMBL" id="BC109101">
    <property type="protein sequence ID" value="AAI09102.1"/>
    <property type="molecule type" value="mRNA"/>
</dbReference>
<dbReference type="EMBL" id="BC109102">
    <property type="protein sequence ID" value="AAI09103.1"/>
    <property type="molecule type" value="mRNA"/>
</dbReference>
<dbReference type="CCDS" id="CCDS6653.1"/>
<dbReference type="PIR" id="A46293">
    <property type="entry name" value="A46293"/>
</dbReference>
<dbReference type="RefSeq" id="NP_001091102.1">
    <property type="nucleotide sequence ID" value="NM_001097633.2"/>
</dbReference>
<dbReference type="RefSeq" id="NP_001091103.1">
    <property type="nucleotide sequence ID" value="NM_001097634.1"/>
</dbReference>
<dbReference type="RefSeq" id="NP_001091104.1">
    <property type="nucleotide sequence ID" value="NM_001097635.2"/>
</dbReference>
<dbReference type="RefSeq" id="NP_001091105.1">
    <property type="nucleotide sequence ID" value="NM_001097636.2"/>
</dbReference>
<dbReference type="RefSeq" id="NP_001394110.1">
    <property type="nucleotide sequence ID" value="NM_001407181.1"/>
</dbReference>
<dbReference type="RefSeq" id="NP_001394111.1">
    <property type="nucleotide sequence ID" value="NM_001407182.1"/>
</dbReference>
<dbReference type="RefSeq" id="NP_001394112.1">
    <property type="nucleotide sequence ID" value="NM_001407183.1"/>
</dbReference>
<dbReference type="RefSeq" id="NP_001394113.1">
    <property type="nucleotide sequence ID" value="NM_001407184.1"/>
</dbReference>
<dbReference type="RefSeq" id="NP_001481.2">
    <property type="nucleotide sequence ID" value="NM_001490.4"/>
</dbReference>
<dbReference type="RefSeq" id="XP_016870109.1">
    <property type="nucleotide sequence ID" value="XM_017014620.1"/>
</dbReference>
<dbReference type="RefSeq" id="XP_016870110.1">
    <property type="nucleotide sequence ID" value="XM_017014621.1"/>
</dbReference>
<dbReference type="RefSeq" id="XP_047279183.1">
    <property type="nucleotide sequence ID" value="XM_047423227.1"/>
</dbReference>
<dbReference type="RefSeq" id="XP_047279184.1">
    <property type="nucleotide sequence ID" value="XM_047423228.1"/>
</dbReference>
<dbReference type="RefSeq" id="XP_047279185.1">
    <property type="nucleotide sequence ID" value="XM_047423229.1"/>
</dbReference>
<dbReference type="RefSeq" id="XP_054218707.1">
    <property type="nucleotide sequence ID" value="XM_054362732.1"/>
</dbReference>
<dbReference type="RefSeq" id="XP_054218708.1">
    <property type="nucleotide sequence ID" value="XM_054362733.1"/>
</dbReference>
<dbReference type="RefSeq" id="XP_054218709.1">
    <property type="nucleotide sequence ID" value="XM_054362734.1"/>
</dbReference>
<dbReference type="SMR" id="Q02742"/>
<dbReference type="BioGRID" id="108920">
    <property type="interactions" value="38"/>
</dbReference>
<dbReference type="FunCoup" id="Q02742">
    <property type="interactions" value="492"/>
</dbReference>
<dbReference type="IntAct" id="Q02742">
    <property type="interactions" value="37"/>
</dbReference>
<dbReference type="STRING" id="9606.ENSP00000415454"/>
<dbReference type="ChEMBL" id="CHEMBL2321632"/>
<dbReference type="CAZy" id="GT14">
    <property type="family name" value="Glycosyltransferase Family 14"/>
</dbReference>
<dbReference type="GlyCosmos" id="Q02742">
    <property type="glycosylation" value="2 sites, No reported glycans"/>
</dbReference>
<dbReference type="GlyGen" id="Q02742">
    <property type="glycosylation" value="3 sites, 1 N-linked glycan (1 site)"/>
</dbReference>
<dbReference type="iPTMnet" id="Q02742"/>
<dbReference type="PhosphoSitePlus" id="Q02742"/>
<dbReference type="BioMuta" id="GCNT1"/>
<dbReference type="DMDM" id="218512053"/>
<dbReference type="jPOST" id="Q02742"/>
<dbReference type="MassIVE" id="Q02742"/>
<dbReference type="PaxDb" id="9606-ENSP00000415454"/>
<dbReference type="PeptideAtlas" id="Q02742"/>
<dbReference type="ProteomicsDB" id="58117"/>
<dbReference type="Antibodypedia" id="27275">
    <property type="antibodies" value="218 antibodies from 24 providers"/>
</dbReference>
<dbReference type="DNASU" id="2650"/>
<dbReference type="Ensembl" id="ENST00000376730.5">
    <property type="protein sequence ID" value="ENSP00000365920.4"/>
    <property type="gene ID" value="ENSG00000187210.14"/>
</dbReference>
<dbReference type="Ensembl" id="ENST00000442371.5">
    <property type="protein sequence ID" value="ENSP00000415454.1"/>
    <property type="gene ID" value="ENSG00000187210.14"/>
</dbReference>
<dbReference type="Ensembl" id="ENST00000444201.6">
    <property type="protein sequence ID" value="ENSP00000390703.2"/>
    <property type="gene ID" value="ENSG00000187210.14"/>
</dbReference>
<dbReference type="GeneID" id="2650"/>
<dbReference type="KEGG" id="hsa:2650"/>
<dbReference type="MANE-Select" id="ENST00000376730.5">
    <property type="protein sequence ID" value="ENSP00000365920.4"/>
    <property type="RefSeq nucleotide sequence ID" value="NM_001490.5"/>
    <property type="RefSeq protein sequence ID" value="NP_001481.2"/>
</dbReference>
<dbReference type="UCSC" id="uc004akf.5">
    <property type="organism name" value="human"/>
</dbReference>
<dbReference type="AGR" id="HGNC:4203"/>
<dbReference type="CTD" id="2650"/>
<dbReference type="DisGeNET" id="2650"/>
<dbReference type="GeneCards" id="GCNT1"/>
<dbReference type="HGNC" id="HGNC:4203">
    <property type="gene designation" value="GCNT1"/>
</dbReference>
<dbReference type="HPA" id="ENSG00000187210">
    <property type="expression patterns" value="Group enriched (intestine, parathyroid gland, stomach, thyroid gland)"/>
</dbReference>
<dbReference type="MIM" id="600391">
    <property type="type" value="gene"/>
</dbReference>
<dbReference type="neXtProt" id="NX_Q02742"/>
<dbReference type="OpenTargets" id="ENSG00000187210"/>
<dbReference type="PharmGKB" id="PA168"/>
<dbReference type="VEuPathDB" id="HostDB:ENSG00000187210"/>
<dbReference type="eggNOG" id="KOG0799">
    <property type="taxonomic scope" value="Eukaryota"/>
</dbReference>
<dbReference type="GeneTree" id="ENSGT00940000161348"/>
<dbReference type="HOGENOM" id="CLU_032341_1_2_1"/>
<dbReference type="InParanoid" id="Q02742"/>
<dbReference type="OMA" id="NGKLTNM"/>
<dbReference type="OrthoDB" id="2019572at2759"/>
<dbReference type="PAN-GO" id="Q02742">
    <property type="GO annotations" value="1 GO annotation based on evolutionary models"/>
</dbReference>
<dbReference type="PhylomeDB" id="Q02742"/>
<dbReference type="TreeFam" id="TF315534"/>
<dbReference type="BioCyc" id="MetaCyc:HS05939-MONOMER"/>
<dbReference type="BRENDA" id="2.4.1.102">
    <property type="organism ID" value="2681"/>
</dbReference>
<dbReference type="PathwayCommons" id="Q02742"/>
<dbReference type="Reactome" id="R-HSA-913709">
    <property type="pathway name" value="O-linked glycosylation of mucins"/>
</dbReference>
<dbReference type="SignaLink" id="Q02742"/>
<dbReference type="UniPathway" id="UPA00378"/>
<dbReference type="BioGRID-ORCS" id="2650">
    <property type="hits" value="16 hits in 1150 CRISPR screens"/>
</dbReference>
<dbReference type="ChiTaRS" id="GCNT1">
    <property type="organism name" value="human"/>
</dbReference>
<dbReference type="GeneWiki" id="GCNT1"/>
<dbReference type="GenomeRNAi" id="2650"/>
<dbReference type="Pharos" id="Q02742">
    <property type="development level" value="Tbio"/>
</dbReference>
<dbReference type="PRO" id="PR:Q02742"/>
<dbReference type="Proteomes" id="UP000005640">
    <property type="component" value="Chromosome 9"/>
</dbReference>
<dbReference type="RNAct" id="Q02742">
    <property type="molecule type" value="protein"/>
</dbReference>
<dbReference type="Bgee" id="ENSG00000187210">
    <property type="expression patterns" value="Expressed in duodenum and 133 other cell types or tissues"/>
</dbReference>
<dbReference type="GO" id="GO:0005615">
    <property type="term" value="C:extracellular space"/>
    <property type="evidence" value="ECO:0007669"/>
    <property type="project" value="Ensembl"/>
</dbReference>
<dbReference type="GO" id="GO:0031985">
    <property type="term" value="C:Golgi cisterna"/>
    <property type="evidence" value="ECO:0000314"/>
    <property type="project" value="UniProtKB"/>
</dbReference>
<dbReference type="GO" id="GO:0000139">
    <property type="term" value="C:Golgi membrane"/>
    <property type="evidence" value="ECO:0000304"/>
    <property type="project" value="Reactome"/>
</dbReference>
<dbReference type="GO" id="GO:0016020">
    <property type="term" value="C:membrane"/>
    <property type="evidence" value="ECO:0000304"/>
    <property type="project" value="ProtInc"/>
</dbReference>
<dbReference type="GO" id="GO:0005802">
    <property type="term" value="C:trans-Golgi network"/>
    <property type="evidence" value="ECO:0000314"/>
    <property type="project" value="UniProtKB"/>
</dbReference>
<dbReference type="GO" id="GO:0003829">
    <property type="term" value="F:beta-1,3-galactosyl-O-glycosyl-glycoprotein beta-1,6-N-acetylglucosaminyltransferase activity"/>
    <property type="evidence" value="ECO:0000314"/>
    <property type="project" value="GO_Central"/>
</dbReference>
<dbReference type="GO" id="GO:0060352">
    <property type="term" value="P:cell adhesion molecule production"/>
    <property type="evidence" value="ECO:0000315"/>
    <property type="project" value="UniProtKB"/>
</dbReference>
<dbReference type="GO" id="GO:0016268">
    <property type="term" value="P:core 2 O-glycan biosynthetic process"/>
    <property type="evidence" value="ECO:0000314"/>
    <property type="project" value="UniProtKB"/>
</dbReference>
<dbReference type="GO" id="GO:0009101">
    <property type="term" value="P:glycoprotein biosynthetic process"/>
    <property type="evidence" value="ECO:0000315"/>
    <property type="project" value="UniProtKB"/>
</dbReference>
<dbReference type="GO" id="GO:0060993">
    <property type="term" value="P:kidney morphogenesis"/>
    <property type="evidence" value="ECO:0007669"/>
    <property type="project" value="Ensembl"/>
</dbReference>
<dbReference type="GO" id="GO:0050901">
    <property type="term" value="P:leukocyte tethering or rolling"/>
    <property type="evidence" value="ECO:0000315"/>
    <property type="project" value="UniProtKB"/>
</dbReference>
<dbReference type="GO" id="GO:0016266">
    <property type="term" value="P:O-glycan processing"/>
    <property type="evidence" value="ECO:0000304"/>
    <property type="project" value="Reactome"/>
</dbReference>
<dbReference type="GO" id="GO:1903238">
    <property type="term" value="P:positive regulation of leukocyte tethering or rolling"/>
    <property type="evidence" value="ECO:0007669"/>
    <property type="project" value="Ensembl"/>
</dbReference>
<dbReference type="GO" id="GO:0032868">
    <property type="term" value="P:response to insulin"/>
    <property type="evidence" value="ECO:0007669"/>
    <property type="project" value="Ensembl"/>
</dbReference>
<dbReference type="GO" id="GO:0048729">
    <property type="term" value="P:tissue morphogenesis"/>
    <property type="evidence" value="ECO:0007669"/>
    <property type="project" value="Ensembl"/>
</dbReference>
<dbReference type="InterPro" id="IPR003406">
    <property type="entry name" value="Glyco_trans_14"/>
</dbReference>
<dbReference type="PANTHER" id="PTHR19297:SF96">
    <property type="entry name" value="BETA-1,3-GALACTOSYL-O-GLYCOSYL-GLYCOPROTEIN BETA-1,6-N-ACETYLGLUCOSAMINYLTRANSFERASE"/>
    <property type="match status" value="1"/>
</dbReference>
<dbReference type="PANTHER" id="PTHR19297">
    <property type="entry name" value="GLYCOSYLTRANSFERASE 14 FAMILY MEMBER"/>
    <property type="match status" value="1"/>
</dbReference>
<dbReference type="Pfam" id="PF02485">
    <property type="entry name" value="Branch"/>
    <property type="match status" value="1"/>
</dbReference>